<reference key="1">
    <citation type="submission" date="1995-07" db="EMBL/GenBank/DDBJ databases">
        <title>4-coumarate:CoA ligase genes in rice: divergent structure and differential regulation.</title>
        <authorList>
            <person name="Zhao Y."/>
            <person name="Kung S.D."/>
            <person name="Bottino P.J."/>
        </authorList>
    </citation>
    <scope>NUCLEOTIDE SEQUENCE [MRNA]</scope>
</reference>
<reference key="2">
    <citation type="journal article" date="2005" name="Nature">
        <title>The map-based sequence of the rice genome.</title>
        <authorList>
            <consortium name="International rice genome sequencing project (IRGSP)"/>
        </authorList>
    </citation>
    <scope>NUCLEOTIDE SEQUENCE [LARGE SCALE GENOMIC DNA]</scope>
    <source>
        <strain>cv. Nipponbare</strain>
    </source>
</reference>
<reference key="3">
    <citation type="journal article" date="2008" name="Nucleic Acids Res.">
        <title>The rice annotation project database (RAP-DB): 2008 update.</title>
        <authorList>
            <consortium name="The rice annotation project (RAP)"/>
        </authorList>
    </citation>
    <scope>GENOME REANNOTATION</scope>
    <source>
        <strain>cv. Nipponbare</strain>
    </source>
</reference>
<reference key="4">
    <citation type="journal article" date="2013" name="Rice">
        <title>Improvement of the Oryza sativa Nipponbare reference genome using next generation sequence and optical map data.</title>
        <authorList>
            <person name="Kawahara Y."/>
            <person name="de la Bastide M."/>
            <person name="Hamilton J.P."/>
            <person name="Kanamori H."/>
            <person name="McCombie W.R."/>
            <person name="Ouyang S."/>
            <person name="Schwartz D.C."/>
            <person name="Tanaka T."/>
            <person name="Wu J."/>
            <person name="Zhou S."/>
            <person name="Childs K.L."/>
            <person name="Davidson R.M."/>
            <person name="Lin H."/>
            <person name="Quesada-Ocampo L."/>
            <person name="Vaillancourt B."/>
            <person name="Sakai H."/>
            <person name="Lee S.S."/>
            <person name="Kim J."/>
            <person name="Numa H."/>
            <person name="Itoh T."/>
            <person name="Buell C.R."/>
            <person name="Matsumoto T."/>
        </authorList>
    </citation>
    <scope>GENOME REANNOTATION</scope>
    <source>
        <strain>cv. Nipponbare</strain>
    </source>
</reference>
<reference key="5">
    <citation type="journal article" date="2003" name="Science">
        <title>Collection, mapping, and annotation of over 28,000 cDNA clones from japonica rice.</title>
        <authorList>
            <consortium name="The rice full-length cDNA consortium"/>
        </authorList>
    </citation>
    <scope>NUCLEOTIDE SEQUENCE [LARGE SCALE MRNA]</scope>
    <source>
        <strain>cv. Nipponbare</strain>
    </source>
</reference>
<reference key="6">
    <citation type="journal article" date="2008" name="New Phytol.">
        <title>Genome-wide analysis of a land plant-specific acyl:coenzyme A synthetase (ACS) gene family in Arabidopsis, poplar, rice and Physcomitrella.</title>
        <authorList>
            <person name="de Azevedo Souza C."/>
            <person name="Barbazuk B."/>
            <person name="Ralph S.G."/>
            <person name="Bohlmann J."/>
            <person name="Hamberger B."/>
            <person name="Douglas C.J."/>
        </authorList>
    </citation>
    <scope>GENE FAMILY</scope>
</reference>
<reference key="7">
    <citation type="journal article" date="2011" name="Plant Physiol.">
        <title>Functional characterization of evolutionarily divergent 4-coumarate:coenzyme a ligases in rice.</title>
        <authorList>
            <person name="Gui J."/>
            <person name="Shen J."/>
            <person name="Li L."/>
        </authorList>
    </citation>
    <scope>FUNCTION</scope>
    <scope>CATALYTIC ACTIVITY</scope>
    <scope>BIOPHYSICOCHEMICAL PROPERTIES</scope>
    <scope>TISSUE SPECIFICITY</scope>
</reference>
<reference key="8">
    <citation type="journal article" date="2013" name="Biochem. Biophys. Res. Commun.">
        <title>Analysis of five rice 4-coumarate:coenzyme A ligase enzyme activity and stress response for potential roles in lignin and flavonoid biosynthesis in rice.</title>
        <authorList>
            <person name="Sun H."/>
            <person name="Li Y."/>
            <person name="Feng S."/>
            <person name="Zou W."/>
            <person name="Guo K."/>
            <person name="Fan C."/>
            <person name="Si S."/>
            <person name="Peng L."/>
        </authorList>
    </citation>
    <scope>FUNCTION</scope>
    <scope>CATALYTIC ACTIVITY</scope>
    <scope>INDUCTION</scope>
</reference>
<proteinExistence type="evidence at protein level"/>
<feature type="chain" id="PRO_0000193032" description="4-coumarate--CoA ligase 2">
    <location>
        <begin position="1"/>
        <end position="569"/>
    </location>
</feature>
<feature type="region of interest" description="SBD1" evidence="2">
    <location>
        <begin position="292"/>
        <end position="361"/>
    </location>
</feature>
<feature type="region of interest" description="SBD2" evidence="2">
    <location>
        <begin position="362"/>
        <end position="429"/>
    </location>
</feature>
<feature type="binding site" evidence="1">
    <location>
        <position position="219"/>
    </location>
    <ligand>
        <name>ATP</name>
        <dbReference type="ChEBI" id="CHEBI:30616"/>
    </ligand>
</feature>
<feature type="binding site" evidence="1">
    <location>
        <position position="220"/>
    </location>
    <ligand>
        <name>ATP</name>
        <dbReference type="ChEBI" id="CHEBI:30616"/>
    </ligand>
</feature>
<feature type="binding site" evidence="1">
    <location>
        <position position="221"/>
    </location>
    <ligand>
        <name>ATP</name>
        <dbReference type="ChEBI" id="CHEBI:30616"/>
    </ligand>
</feature>
<feature type="binding site" evidence="1">
    <location>
        <position position="222"/>
    </location>
    <ligand>
        <name>ATP</name>
        <dbReference type="ChEBI" id="CHEBI:30616"/>
    </ligand>
</feature>
<feature type="binding site" evidence="1">
    <location>
        <position position="223"/>
    </location>
    <ligand>
        <name>ATP</name>
        <dbReference type="ChEBI" id="CHEBI:30616"/>
    </ligand>
</feature>
<feature type="binding site" evidence="1">
    <location>
        <position position="227"/>
    </location>
    <ligand>
        <name>ATP</name>
        <dbReference type="ChEBI" id="CHEBI:30616"/>
    </ligand>
</feature>
<feature type="binding site" evidence="1">
    <location>
        <position position="269"/>
    </location>
    <ligand>
        <name>(E)-4-coumaroyl-AMP</name>
        <dbReference type="ChEBI" id="CHEBI:192348"/>
    </ligand>
</feature>
<feature type="binding site" evidence="1">
    <location>
        <position position="273"/>
    </location>
    <ligand>
        <name>(E)-4-coumaroyl-AMP</name>
        <dbReference type="ChEBI" id="CHEBI:192348"/>
    </ligand>
</feature>
<feature type="binding site" evidence="1">
    <location>
        <position position="290"/>
    </location>
    <ligand>
        <name>CoA</name>
        <dbReference type="ChEBI" id="CHEBI:57287"/>
    </ligand>
</feature>
<feature type="binding site" evidence="1">
    <location>
        <position position="339"/>
    </location>
    <ligand>
        <name>(E)-4-coumaroyl-AMP</name>
        <dbReference type="ChEBI" id="CHEBI:192348"/>
    </ligand>
</feature>
<feature type="binding site" evidence="1">
    <location>
        <position position="361"/>
    </location>
    <ligand>
        <name>(E)-4-coumaroyl-AMP</name>
        <dbReference type="ChEBI" id="CHEBI:192348"/>
    </ligand>
</feature>
<feature type="binding site" evidence="1">
    <location>
        <position position="361"/>
    </location>
    <ligand>
        <name>ATP</name>
        <dbReference type="ChEBI" id="CHEBI:30616"/>
    </ligand>
</feature>
<feature type="binding site" evidence="1">
    <location>
        <position position="362"/>
    </location>
    <ligand>
        <name>(E)-4-coumaroyl-AMP</name>
        <dbReference type="ChEBI" id="CHEBI:192348"/>
    </ligand>
</feature>
<feature type="binding site" evidence="1">
    <location>
        <position position="362"/>
    </location>
    <ligand>
        <name>ATP</name>
        <dbReference type="ChEBI" id="CHEBI:30616"/>
    </ligand>
</feature>
<feature type="binding site" evidence="1">
    <location>
        <position position="366"/>
    </location>
    <ligand>
        <name>(E)-4-coumaroyl-AMP</name>
        <dbReference type="ChEBI" id="CHEBI:192348"/>
    </ligand>
</feature>
<feature type="binding site" evidence="1">
    <location>
        <position position="366"/>
    </location>
    <ligand>
        <name>ATP</name>
        <dbReference type="ChEBI" id="CHEBI:30616"/>
    </ligand>
</feature>
<feature type="binding site" evidence="1">
    <location>
        <position position="374"/>
    </location>
    <ligand>
        <name>(E)-4-coumaroyl-AMP</name>
        <dbReference type="ChEBI" id="CHEBI:192348"/>
    </ligand>
</feature>
<feature type="binding site" evidence="1">
    <location>
        <position position="450"/>
    </location>
    <ligand>
        <name>ATP</name>
        <dbReference type="ChEBI" id="CHEBI:30616"/>
    </ligand>
</feature>
<feature type="binding site" evidence="1">
    <location>
        <position position="465"/>
    </location>
    <ligand>
        <name>ATP</name>
        <dbReference type="ChEBI" id="CHEBI:30616"/>
    </ligand>
</feature>
<feature type="binding site" evidence="1">
    <location>
        <position position="467"/>
    </location>
    <ligand>
        <name>(E)-4-coumaroyl-AMP</name>
        <dbReference type="ChEBI" id="CHEBI:192348"/>
    </ligand>
</feature>
<feature type="binding site" evidence="1">
    <location>
        <position position="471"/>
    </location>
    <ligand>
        <name>(E)-4-coumaroyl-AMP</name>
        <dbReference type="ChEBI" id="CHEBI:192348"/>
    </ligand>
</feature>
<feature type="binding site" evidence="1">
    <location>
        <position position="473"/>
    </location>
    <ligand>
        <name>CoA</name>
        <dbReference type="ChEBI" id="CHEBI:57287"/>
    </ligand>
</feature>
<feature type="binding site" evidence="1">
    <location>
        <position position="474"/>
    </location>
    <ligand>
        <name>CoA</name>
        <dbReference type="ChEBI" id="CHEBI:57287"/>
    </ligand>
</feature>
<feature type="binding site" evidence="1">
    <location>
        <position position="556"/>
    </location>
    <ligand>
        <name>ATP</name>
        <dbReference type="ChEBI" id="CHEBI:30616"/>
    </ligand>
</feature>
<feature type="sequence conflict" description="In Ref. 1; AAA69580." evidence="6" ref="1">
    <original>A</original>
    <variation>G</variation>
    <location>
        <position position="138"/>
    </location>
</feature>
<feature type="sequence conflict" description="In Ref. 1; AAA69580." evidence="6" ref="1">
    <original>EG</original>
    <variation>KA</variation>
    <location>
        <begin position="186"/>
        <end position="187"/>
    </location>
</feature>
<feature type="sequence conflict" description="In Ref. 1; AAA69580." evidence="6" ref="1">
    <original>P</original>
    <variation>A</variation>
    <location>
        <position position="226"/>
    </location>
</feature>
<feature type="sequence conflict" description="In Ref. 1; AAA69580." evidence="6" ref="1">
    <original>QQ</original>
    <variation>HE</variation>
    <location>
        <begin position="242"/>
        <end position="243"/>
    </location>
</feature>
<feature type="sequence conflict" description="In Ref. 1; AAA69580." evidence="6" ref="1">
    <original>CAVRAGA</original>
    <variation>SRVRPAP</variation>
    <location>
        <begin position="277"/>
        <end position="283"/>
    </location>
</feature>
<feature type="sequence conflict" description="In Ref. 1; AAA69580." evidence="6" ref="1">
    <original>A</original>
    <variation>G</variation>
    <location>
        <position position="308"/>
    </location>
</feature>
<feature type="sequence conflict" description="In Ref. 1; AAA69580." evidence="6" ref="1">
    <original>L</original>
    <variation>V</variation>
    <location>
        <position position="316"/>
    </location>
</feature>
<feature type="sequence conflict" description="In Ref. 1; AAA69580." evidence="6" ref="1">
    <original>D</original>
    <variation>N</variation>
    <location>
        <position position="450"/>
    </location>
</feature>
<feature type="sequence conflict" description="In Ref. 1; AAA69580." evidence="6" ref="1">
    <original>A</original>
    <variation>R</variation>
    <location>
        <position position="493"/>
    </location>
</feature>
<keyword id="KW-0067">ATP-binding</keyword>
<keyword id="KW-0436">Ligase</keyword>
<keyword id="KW-0460">Magnesium</keyword>
<keyword id="KW-0547">Nucleotide-binding</keyword>
<keyword id="KW-0587">Phenylpropanoid metabolism</keyword>
<keyword id="KW-1185">Reference proteome</keyword>
<accession>Q42982</accession>
<accession>B7EY74</accession>
<accession>Q0DYF5</accession>
<accession>Q6YUH6</accession>
<gene>
    <name evidence="5" type="primary">4CL2</name>
    <name evidence="9" type="synonym">4CL.2</name>
    <name evidence="12" type="ordered locus">Os02g0697400</name>
    <name evidence="6" type="ordered locus">LOC_Os02g46970</name>
    <name evidence="10" type="ORF">P0459B01.4-1</name>
    <name evidence="11" type="ORF">P0666E12.12-1</name>
</gene>
<evidence type="ECO:0000250" key="1">
    <source>
        <dbReference type="UniProtKB" id="O24146"/>
    </source>
</evidence>
<evidence type="ECO:0000250" key="2">
    <source>
        <dbReference type="UniProtKB" id="Q42524"/>
    </source>
</evidence>
<evidence type="ECO:0000269" key="3">
    <source>
    </source>
</evidence>
<evidence type="ECO:0000269" key="4">
    <source>
    </source>
</evidence>
<evidence type="ECO:0000303" key="5">
    <source>
    </source>
</evidence>
<evidence type="ECO:0000305" key="6"/>
<evidence type="ECO:0000305" key="7">
    <source>
    </source>
</evidence>
<evidence type="ECO:0000305" key="8">
    <source>
    </source>
</evidence>
<evidence type="ECO:0000312" key="9">
    <source>
        <dbReference type="EMBL" id="AAA69580.1"/>
    </source>
</evidence>
<evidence type="ECO:0000312" key="10">
    <source>
        <dbReference type="EMBL" id="BAD07859.1"/>
    </source>
</evidence>
<evidence type="ECO:0000312" key="11">
    <source>
        <dbReference type="EMBL" id="BAD08175.1"/>
    </source>
</evidence>
<evidence type="ECO:0000312" key="12">
    <source>
        <dbReference type="EMBL" id="BAS80426.1"/>
    </source>
</evidence>
<comment type="function">
    <text evidence="1 3 4">Involved in the phenylpropanoid metabolism by mediating the activation of a number of hydroxycinnamates for the biosynthesis of monolignols and other phenolic secondary metabolites (PubMed:21807887, PubMed:23246835). Catalyzes the formation of CoA esters of cinnamate, 4-coumarate, caffeate and ferulate (PubMed:21807887, PubMed:23246835). Is more efficient with substrates in the following order: ferulate &gt; 4-coumarate &gt; caffeate &gt; cinnamate (PubMed:21807887). Cannot convert sinapate to its corresponding CoA ester (PubMed:21807887, PubMed:23246835). Follows a two-step reaction mechanism, wherein the carboxylate substrate first undergoes adenylation by ATP, followed by a thioesterification in the presence of CoA to yield the final CoA thioester (By similarity).</text>
</comment>
<comment type="catalytic activity">
    <reaction evidence="3 4">
        <text>(E)-ferulate + ATP + CoA = (E)-feruloyl-CoA + AMP + diphosphate</text>
        <dbReference type="Rhea" id="RHEA:36251"/>
        <dbReference type="ChEBI" id="CHEBI:29749"/>
        <dbReference type="ChEBI" id="CHEBI:30616"/>
        <dbReference type="ChEBI" id="CHEBI:33019"/>
        <dbReference type="ChEBI" id="CHEBI:57287"/>
        <dbReference type="ChEBI" id="CHEBI:87305"/>
        <dbReference type="ChEBI" id="CHEBI:456215"/>
        <dbReference type="EC" id="6.2.1.34"/>
    </reaction>
    <physiologicalReaction direction="left-to-right" evidence="3 4">
        <dbReference type="Rhea" id="RHEA:36252"/>
    </physiologicalReaction>
</comment>
<comment type="catalytic activity">
    <reaction evidence="3 4">
        <text>(E)-4-coumarate + ATP + CoA = (E)-4-coumaroyl-CoA + AMP + diphosphate</text>
        <dbReference type="Rhea" id="RHEA:19641"/>
        <dbReference type="ChEBI" id="CHEBI:12876"/>
        <dbReference type="ChEBI" id="CHEBI:30616"/>
        <dbReference type="ChEBI" id="CHEBI:33019"/>
        <dbReference type="ChEBI" id="CHEBI:57287"/>
        <dbReference type="ChEBI" id="CHEBI:85008"/>
        <dbReference type="ChEBI" id="CHEBI:456215"/>
        <dbReference type="EC" id="6.2.1.12"/>
    </reaction>
    <physiologicalReaction direction="left-to-right" evidence="3 4">
        <dbReference type="Rhea" id="RHEA:19642"/>
    </physiologicalReaction>
</comment>
<comment type="catalytic activity">
    <reaction evidence="3 4">
        <text>(E)-caffeate + ATP + CoA = (E)-caffeoyl-CoA + AMP + diphosphate</text>
        <dbReference type="Rhea" id="RHEA:36299"/>
        <dbReference type="ChEBI" id="CHEBI:30616"/>
        <dbReference type="ChEBI" id="CHEBI:33019"/>
        <dbReference type="ChEBI" id="CHEBI:57287"/>
        <dbReference type="ChEBI" id="CHEBI:57770"/>
        <dbReference type="ChEBI" id="CHEBI:87136"/>
        <dbReference type="ChEBI" id="CHEBI:456215"/>
    </reaction>
    <physiologicalReaction direction="left-to-right" evidence="3 4">
        <dbReference type="Rhea" id="RHEA:36300"/>
    </physiologicalReaction>
</comment>
<comment type="catalytic activity">
    <reaction evidence="3 4">
        <text>(E)-cinnamate + ATP + CoA = (E)-cinnamoyl-CoA + AMP + diphosphate</text>
        <dbReference type="Rhea" id="RHEA:64788"/>
        <dbReference type="ChEBI" id="CHEBI:15669"/>
        <dbReference type="ChEBI" id="CHEBI:30616"/>
        <dbReference type="ChEBI" id="CHEBI:33019"/>
        <dbReference type="ChEBI" id="CHEBI:57252"/>
        <dbReference type="ChEBI" id="CHEBI:57287"/>
        <dbReference type="ChEBI" id="CHEBI:456215"/>
    </reaction>
    <physiologicalReaction direction="left-to-right" evidence="3 4">
        <dbReference type="Rhea" id="RHEA:64789"/>
    </physiologicalReaction>
</comment>
<comment type="catalytic activity">
    <reaction evidence="7 8">
        <text>(E)-ferulate + ATP + H(+) = (E)-feruloyl-AMP + diphosphate</text>
        <dbReference type="Rhea" id="RHEA:72439"/>
        <dbReference type="ChEBI" id="CHEBI:15378"/>
        <dbReference type="ChEBI" id="CHEBI:29749"/>
        <dbReference type="ChEBI" id="CHEBI:30616"/>
        <dbReference type="ChEBI" id="CHEBI:33019"/>
        <dbReference type="ChEBI" id="CHEBI:192350"/>
    </reaction>
    <physiologicalReaction direction="left-to-right" evidence="7 8">
        <dbReference type="Rhea" id="RHEA:72440"/>
    </physiologicalReaction>
</comment>
<comment type="catalytic activity">
    <reaction evidence="7 8">
        <text>(E)-feruloyl-AMP + CoA = (E)-feruloyl-CoA + AMP + H(+)</text>
        <dbReference type="Rhea" id="RHEA:72443"/>
        <dbReference type="ChEBI" id="CHEBI:15378"/>
        <dbReference type="ChEBI" id="CHEBI:57287"/>
        <dbReference type="ChEBI" id="CHEBI:87305"/>
        <dbReference type="ChEBI" id="CHEBI:192350"/>
        <dbReference type="ChEBI" id="CHEBI:456215"/>
    </reaction>
    <physiologicalReaction direction="left-to-right" evidence="7 8">
        <dbReference type="Rhea" id="RHEA:72444"/>
    </physiologicalReaction>
</comment>
<comment type="catalytic activity">
    <reaction evidence="7 8">
        <text>(E)-4-coumarate + ATP + H(+) = (E)-4-coumaroyl-AMP + diphosphate</text>
        <dbReference type="Rhea" id="RHEA:72419"/>
        <dbReference type="ChEBI" id="CHEBI:12876"/>
        <dbReference type="ChEBI" id="CHEBI:15378"/>
        <dbReference type="ChEBI" id="CHEBI:30616"/>
        <dbReference type="ChEBI" id="CHEBI:33019"/>
        <dbReference type="ChEBI" id="CHEBI:192348"/>
    </reaction>
    <physiologicalReaction direction="left-to-right" evidence="7 8">
        <dbReference type="Rhea" id="RHEA:72420"/>
    </physiologicalReaction>
</comment>
<comment type="catalytic activity">
    <reaction evidence="7 8">
        <text>(E)-4-coumaroyl-AMP + CoA = (E)-4-coumaroyl-CoA + AMP + H(+)</text>
        <dbReference type="Rhea" id="RHEA:72423"/>
        <dbReference type="ChEBI" id="CHEBI:15378"/>
        <dbReference type="ChEBI" id="CHEBI:57287"/>
        <dbReference type="ChEBI" id="CHEBI:85008"/>
        <dbReference type="ChEBI" id="CHEBI:192348"/>
        <dbReference type="ChEBI" id="CHEBI:456215"/>
    </reaction>
    <physiologicalReaction direction="left-to-right" evidence="7 8">
        <dbReference type="Rhea" id="RHEA:72424"/>
    </physiologicalReaction>
</comment>
<comment type="catalytic activity">
    <reaction evidence="7 8">
        <text>(E)-caffeate + ATP + H(+) = (E)-caffeoyl-AMP + diphosphate</text>
        <dbReference type="Rhea" id="RHEA:72431"/>
        <dbReference type="ChEBI" id="CHEBI:15378"/>
        <dbReference type="ChEBI" id="CHEBI:30616"/>
        <dbReference type="ChEBI" id="CHEBI:33019"/>
        <dbReference type="ChEBI" id="CHEBI:57770"/>
        <dbReference type="ChEBI" id="CHEBI:192349"/>
    </reaction>
    <physiologicalReaction direction="left-to-right" evidence="7 8">
        <dbReference type="Rhea" id="RHEA:72432"/>
    </physiologicalReaction>
</comment>
<comment type="catalytic activity">
    <reaction evidence="7 8">
        <text>(E)-caffeoyl-AMP + CoA = (E)-caffeoyl-CoA + AMP + H(+)</text>
        <dbReference type="Rhea" id="RHEA:72435"/>
        <dbReference type="ChEBI" id="CHEBI:15378"/>
        <dbReference type="ChEBI" id="CHEBI:57287"/>
        <dbReference type="ChEBI" id="CHEBI:87136"/>
        <dbReference type="ChEBI" id="CHEBI:192349"/>
        <dbReference type="ChEBI" id="CHEBI:456215"/>
    </reaction>
    <physiologicalReaction direction="left-to-right" evidence="7 8">
        <dbReference type="Rhea" id="RHEA:72436"/>
    </physiologicalReaction>
</comment>
<comment type="cofactor">
    <cofactor evidence="1">
        <name>Mg(2+)</name>
        <dbReference type="ChEBI" id="CHEBI:18420"/>
    </cofactor>
</comment>
<comment type="biophysicochemical properties">
    <kinetics>
        <KM evidence="3">21.7 uM for cinnamate</KM>
        <KM evidence="3">16.8 uM for 4-coumarate</KM>
        <KM evidence="3">21.6 uM for caffeate</KM>
        <KM evidence="3">2.2 uM for ferulate</KM>
        <Vmax evidence="3">299.0 pmol/sec/mg enzyme with cinnamate as substrate</Vmax>
        <Vmax evidence="3">629.0 pmol/sec/mg enzyme with 4-coumarate as substrate</Vmax>
        <Vmax evidence="3">708.0 pmol/sec/mg enzyme with caffeate as substrate</Vmax>
        <Vmax evidence="3">613.0 pmol/sec/mg enzyme with ferulate as substrate</Vmax>
        <text evidence="3">kcat is 1.13 min(-1) with cinnamate as substrate (PubMed:21807887). kcat is 2.37 min(-1) with 4-coumarate as substrate (PubMed:21807887). kcat is 2.67 min(-1) with caffeate as substrate (PubMed:21807887). kcat is 2.31 min(-1) with ferulate as substrate (PubMed:21807887).</text>
    </kinetics>
</comment>
<comment type="pathway">
    <text evidence="6">Phytoalexin biosynthesis; 3,4',5-trihydroxystilbene biosynthesis; 3,4',5-trihydroxystilbene from trans-4-coumarate: step 1/2.</text>
</comment>
<comment type="tissue specificity">
    <text evidence="3">Expressed in roots, stems, leaf blades, leaf sheaths and spikelets.</text>
</comment>
<comment type="induction">
    <text evidence="4">Induced by UV irradiation (PubMed:23246835). Down-regulated by wounding (PubMed:23246835).</text>
</comment>
<comment type="domain">
    <text evidence="2">Both substrate-binding domains (SBD1 and SBD2) are involved in the substrate recognition, and are sufficient to confer the substrate specificity.</text>
</comment>
<comment type="similarity">
    <text evidence="6">Belongs to the ATP-dependent AMP-binding enzyme family.</text>
</comment>
<sequence length="569" mass="60815">MITVAAPEAQPQVAAAVDEAPPEAVTVFRSKLPDIDIPSHLPLHEYCFARAAELPDAPCLIAAATGRTYTFAETRLLCRRAAAALHRLGVGHGDRVMVLLQNCVEFAVAFFAASFLGAVTTAANPFCTPQEIHKQFKASGVKLILTQSVYVDKLRQHEAFPRIDACTVGDDTLTVITIDDDEATPEGCLPFWDLIADADEGSVPEVAISPDDPVALPFSSGTTGLPKGVVLTHRSVVSGVAQQVDGENPNLHMGAGDVALCVLPLFHIFSLNSVLLCAVRAGAAVALMPRFEMGAMLGAIERWRVTVAAVVPPLVLALAKNPFVERHDLSSIRIVLSGAAPLGKELEDALRARLPQAIFGQGYGMTEAGPVLSMCPAFAKEPTPAKSGSCGTVVRNAELKVVDPDTGFSLGRNLPGEICIRGPQIMKGYLNDPEATAATIDVEGWLHTGDIGYVDDDDEVFIVDRVKELIKFKGFQVPPAELESLLIAHPSIADAAVVPQKDDVAGEVPVAFVVRAADSDITEESIKEFISKQVVFYKRLHKVHFIHAIPKSASGKILRRELRAKLAAC</sequence>
<organism>
    <name type="scientific">Oryza sativa subsp. japonica</name>
    <name type="common">Rice</name>
    <dbReference type="NCBI Taxonomy" id="39947"/>
    <lineage>
        <taxon>Eukaryota</taxon>
        <taxon>Viridiplantae</taxon>
        <taxon>Streptophyta</taxon>
        <taxon>Embryophyta</taxon>
        <taxon>Tracheophyta</taxon>
        <taxon>Spermatophyta</taxon>
        <taxon>Magnoliopsida</taxon>
        <taxon>Liliopsida</taxon>
        <taxon>Poales</taxon>
        <taxon>Poaceae</taxon>
        <taxon>BOP clade</taxon>
        <taxon>Oryzoideae</taxon>
        <taxon>Oryzeae</taxon>
        <taxon>Oryzinae</taxon>
        <taxon>Oryza</taxon>
        <taxon>Oryza sativa</taxon>
    </lineage>
</organism>
<dbReference type="EC" id="6.2.1.12" evidence="3 4"/>
<dbReference type="EC" id="6.2.1.34" evidence="3 4"/>
<dbReference type="EMBL" id="L43362">
    <property type="protein sequence ID" value="AAA69580.1"/>
    <property type="molecule type" value="mRNA"/>
</dbReference>
<dbReference type="EMBL" id="AP004778">
    <property type="protein sequence ID" value="BAD07859.1"/>
    <property type="molecule type" value="Genomic_DNA"/>
</dbReference>
<dbReference type="EMBL" id="AP005868">
    <property type="protein sequence ID" value="BAD08175.1"/>
    <property type="molecule type" value="Genomic_DNA"/>
</dbReference>
<dbReference type="EMBL" id="AP008208">
    <property type="protein sequence ID" value="BAF09733.1"/>
    <property type="molecule type" value="Genomic_DNA"/>
</dbReference>
<dbReference type="EMBL" id="AP014958">
    <property type="protein sequence ID" value="BAS80426.1"/>
    <property type="molecule type" value="Genomic_DNA"/>
</dbReference>
<dbReference type="EMBL" id="AK105636">
    <property type="protein sequence ID" value="BAG97321.1"/>
    <property type="molecule type" value="mRNA"/>
</dbReference>
<dbReference type="PIR" id="T03390">
    <property type="entry name" value="T03390"/>
</dbReference>
<dbReference type="RefSeq" id="XP_015624111.1">
    <property type="nucleotide sequence ID" value="XM_015768625.1"/>
</dbReference>
<dbReference type="SMR" id="Q42982"/>
<dbReference type="FunCoup" id="Q42982">
    <property type="interactions" value="1339"/>
</dbReference>
<dbReference type="STRING" id="39947.Q42982"/>
<dbReference type="PaxDb" id="39947-Q42982"/>
<dbReference type="EnsemblPlants" id="Os02t0697400-01">
    <property type="protein sequence ID" value="Os02t0697400-01"/>
    <property type="gene ID" value="Os02g0697400"/>
</dbReference>
<dbReference type="Gramene" id="Os02t0697400-01">
    <property type="protein sequence ID" value="Os02t0697400-01"/>
    <property type="gene ID" value="Os02g0697400"/>
</dbReference>
<dbReference type="KEGG" id="dosa:Os02g0697400"/>
<dbReference type="eggNOG" id="KOG1176">
    <property type="taxonomic scope" value="Eukaryota"/>
</dbReference>
<dbReference type="HOGENOM" id="CLU_000022_59_2_1"/>
<dbReference type="InParanoid" id="Q42982"/>
<dbReference type="OMA" id="PNSSFWY"/>
<dbReference type="OrthoDB" id="10253869at2759"/>
<dbReference type="BRENDA" id="6.2.1.12">
    <property type="organism ID" value="4460"/>
</dbReference>
<dbReference type="PlantReactome" id="R-OSA-1119316">
    <property type="pathway name" value="Phenylpropanoid biosynthesis"/>
</dbReference>
<dbReference type="PlantReactome" id="R-OSA-1119418">
    <property type="pathway name" value="Suberin biosynthesis"/>
</dbReference>
<dbReference type="PlantReactome" id="R-OSA-1119531">
    <property type="pathway name" value="Flavonoid biosynthesis"/>
</dbReference>
<dbReference type="UniPathway" id="UPA00372">
    <property type="reaction ID" value="UER00547"/>
</dbReference>
<dbReference type="Proteomes" id="UP000000763">
    <property type="component" value="Chromosome 2"/>
</dbReference>
<dbReference type="Proteomes" id="UP000059680">
    <property type="component" value="Chromosome 2"/>
</dbReference>
<dbReference type="GO" id="GO:0106286">
    <property type="term" value="F:(E)-caffeate-CoA ligase activity"/>
    <property type="evidence" value="ECO:0007669"/>
    <property type="project" value="RHEA"/>
</dbReference>
<dbReference type="GO" id="GO:0016207">
    <property type="term" value="F:4-coumarate-CoA ligase activity"/>
    <property type="evidence" value="ECO:0000314"/>
    <property type="project" value="UniProtKB"/>
</dbReference>
<dbReference type="GO" id="GO:0005524">
    <property type="term" value="F:ATP binding"/>
    <property type="evidence" value="ECO:0007669"/>
    <property type="project" value="UniProtKB-KW"/>
</dbReference>
<dbReference type="GO" id="GO:0106290">
    <property type="term" value="F:trans-cinnamate-CoA ligase activity"/>
    <property type="evidence" value="ECO:0000314"/>
    <property type="project" value="UniProtKB"/>
</dbReference>
<dbReference type="GO" id="GO:0050563">
    <property type="term" value="F:trans-feruloyl-CoA synthase activity"/>
    <property type="evidence" value="ECO:0007669"/>
    <property type="project" value="RHEA"/>
</dbReference>
<dbReference type="GO" id="GO:0009698">
    <property type="term" value="P:phenylpropanoid metabolic process"/>
    <property type="evidence" value="ECO:0000314"/>
    <property type="project" value="UniProtKB"/>
</dbReference>
<dbReference type="CDD" id="cd05904">
    <property type="entry name" value="4CL"/>
    <property type="match status" value="1"/>
</dbReference>
<dbReference type="FunFam" id="3.30.300.30:FF:000007">
    <property type="entry name" value="4-coumarate--CoA ligase 2"/>
    <property type="match status" value="1"/>
</dbReference>
<dbReference type="FunFam" id="3.40.50.12780:FF:000003">
    <property type="entry name" value="Long-chain-fatty-acid--CoA ligase FadD"/>
    <property type="match status" value="1"/>
</dbReference>
<dbReference type="Gene3D" id="3.30.300.30">
    <property type="match status" value="1"/>
</dbReference>
<dbReference type="Gene3D" id="3.40.50.12780">
    <property type="entry name" value="N-terminal domain of ligase-like"/>
    <property type="match status" value="1"/>
</dbReference>
<dbReference type="InterPro" id="IPR025110">
    <property type="entry name" value="AMP-bd_C"/>
</dbReference>
<dbReference type="InterPro" id="IPR045851">
    <property type="entry name" value="AMP-bd_C_sf"/>
</dbReference>
<dbReference type="InterPro" id="IPR020845">
    <property type="entry name" value="AMP-binding_CS"/>
</dbReference>
<dbReference type="InterPro" id="IPR000873">
    <property type="entry name" value="AMP-dep_synth/lig_dom"/>
</dbReference>
<dbReference type="InterPro" id="IPR042099">
    <property type="entry name" value="ANL_N_sf"/>
</dbReference>
<dbReference type="PANTHER" id="PTHR24096:SF169">
    <property type="entry name" value="4-COUMARATE--COA LIGASE 3"/>
    <property type="match status" value="1"/>
</dbReference>
<dbReference type="PANTHER" id="PTHR24096">
    <property type="entry name" value="LONG-CHAIN-FATTY-ACID--COA LIGASE"/>
    <property type="match status" value="1"/>
</dbReference>
<dbReference type="Pfam" id="PF00501">
    <property type="entry name" value="AMP-binding"/>
    <property type="match status" value="1"/>
</dbReference>
<dbReference type="Pfam" id="PF13193">
    <property type="entry name" value="AMP-binding_C"/>
    <property type="match status" value="1"/>
</dbReference>
<dbReference type="SUPFAM" id="SSF56801">
    <property type="entry name" value="Acetyl-CoA synthetase-like"/>
    <property type="match status" value="1"/>
</dbReference>
<dbReference type="PROSITE" id="PS00455">
    <property type="entry name" value="AMP_BINDING"/>
    <property type="match status" value="1"/>
</dbReference>
<protein>
    <recommendedName>
        <fullName evidence="5">4-coumarate--CoA ligase 2</fullName>
        <shortName evidence="5">4CL 2</shortName>
        <shortName evidence="5">Os4CL2</shortName>
        <ecNumber evidence="3 4">6.2.1.12</ecNumber>
    </recommendedName>
    <alternativeName>
        <fullName evidence="6">(E)-ferulate--CoA ligase</fullName>
        <ecNumber evidence="3 4">6.2.1.34</ecNumber>
    </alternativeName>
    <alternativeName>
        <fullName evidence="6">4-coumaroyl-CoA synthase 2</fullName>
    </alternativeName>
</protein>
<name>4CL2_ORYSJ</name>